<name>CLE1_ASPVE</name>
<sequence>MSSSIPSVIVCGSQTIPPSRETLDNLASYLTKSPNPELKAVREVLLALPELWAELKATEPQFQALSDEPIITFRDWFLRHDTGSEYEDNIYNLSHLKIHERLPNILLAPLTVIIHIAQYSQYLDGLGLDDSDDCHVHIRQSTSSRNTTDIGPKFQGLCIGSLSAAALDASPTRTALAQNATAAVKLALCIGAYVDSQRLADSGSSSYSEMACFISRWGADCCREMVEEMLSRYPEAYISVELDYNSITITAPSGDMPSLQEDLSREGVRVANVPVNGRYHHSNNGRSLQSLLQLCCSDPCGPFWVPWGQDRLERYLRSILTEPAGWFSDMSETINSITPSETQMPMTTLELGLVSCIPPSLAALPRHHIIRGSLSPPTQPYNYPDTSIAIIGAACKYPGANSLDELWNIFAAGQVMYGEAPPGRFGKETVAGNFLSDADQFDYGLFGISPREAMYMDPQQRIALQVAYQAVESSGYFGSPNPDGDVGCYIGVGNSDYEDNVHSNTPTAYSFTGTSRAFVSGRISHYFKWTGPSITIDTACSSSAAAIHQACSGIILGDCSVALAGGVNIMSSFPADQNIAAAGMTNSTGPCRPFGADATGYSRGEGCGLIVLKRLADALSQGDNVLGVVVATAVNQSDGSSSITVPVLRSQSDLYRRVLSRASMKASDVSYVEAHGTGTQRGDPIEYQGAREVFGSSGRYQAKSHKVYIGSVKANIGHTEAASGVAGVLKVLLMLKHGQIPPQASFTSLNPAIPPSESGQISIATQLEKWKRNFRAACVNNYGAAGNNTAIIICQHPPKTLPSSTNTAQTLTRYPFLITAQSQVSVRRYCLALAQYIETNSKPLSLAAAFSLVAQQQNRNLRHRIAFCASSLPELWRLLTFHAQAAEDTSVLLPPSPRKQVKPIVLVFGGQTGSTLQFSKAVYDSSYHLRQNMDKCDALIQEMGLPSFFPDIFSQEPIEDIVILHSCLFSVQYAYAKAWLDAGLSVHRVIGHSFGQLTAMCISGVLTLENALILVIGRANLIRDCWGEEKGSMLSVQIDRAGAEALAWSESSLGDDSIEVACYNGPNSHVLVGSELAITNVERRASTASLATKRLKTTHGFHSKLVDAIMEQYSNLAHIVSYNAPVIPIETCSETASWKIFTPQLVTEHSRRPVYFCDAVRRVERDLGPCIWLEAGSSSGAVILAKQSLTSKSNYICGLQLGSPSTNPLDSVVDTTLELWNQGSSVQCWAYNPRDLVHPSHFLGLPGYQFDTSPHWLPCATTDHNKSNDPSPVIDGLISLERLSRPEPRVSIFELDQKDWTLAHILRGREVLGGILWPLALYMGLISRAAALLTSSIPSASRLIRFAGLEIKTPLGSDLLNGLCLRLKQVEAWSWGFSLESDCARHATGTVIVDDERTSRPPDHLSSLPDFATATTVFSAPRGVAYKLLEKVAEYDTAYRGLESISMNEDTAIARVHLPPAAGNSRFVGNTITLDQFLLVAEIHALSMEDSKRSEVFACSGFGETTISANFMRATERDRGQTWQVYTRQSAKRGREFLYDTFVYEAGEGEESGSLALALTGARFIRTSTSALQQVVELANTPSRSPVTEEIAPSPNFLQFQEGSANVWSLTVNLLHELTGCALEEISPQTILADMGMDSLAIMEIEARIREVFNVDIRISPVDMGSTVEIICERITAQTSPSHGLVNVVGNSTSNTTSSSSQCTPSSSFESDSDTQATELSLSAPTMEKVARVVATHVGSGEAVLSSSRLHSLGLDSLAVLELQSDLHVNFGVRVHLMQLDCSTTIGDLHALVMRRGVRENIYNGAV</sequence>
<evidence type="ECO:0000255" key="1"/>
<evidence type="ECO:0000255" key="2">
    <source>
        <dbReference type="PROSITE-ProRule" id="PRU00258"/>
    </source>
</evidence>
<evidence type="ECO:0000255" key="3">
    <source>
        <dbReference type="PROSITE-ProRule" id="PRU01348"/>
    </source>
</evidence>
<evidence type="ECO:0000255" key="4">
    <source>
        <dbReference type="PROSITE-ProRule" id="PRU01363"/>
    </source>
</evidence>
<evidence type="ECO:0000256" key="5">
    <source>
        <dbReference type="SAM" id="MobiDB-lite"/>
    </source>
</evidence>
<evidence type="ECO:0000269" key="6">
    <source ref="1"/>
</evidence>
<evidence type="ECO:0000303" key="7">
    <source ref="1"/>
</evidence>
<evidence type="ECO:0000305" key="8">
    <source ref="1"/>
</evidence>
<gene>
    <name evidence="7" type="primary">cle1</name>
</gene>
<dbReference type="EC" id="2.3.1.-" evidence="6"/>
<dbReference type="EMBL" id="LC422695">
    <property type="protein sequence ID" value="BBG28471.1"/>
    <property type="molecule type" value="Genomic_DNA"/>
</dbReference>
<dbReference type="SMR" id="A0A3T0ZHJ0"/>
<dbReference type="VEuPathDB" id="FungiDB:ASPVEDRAFT_872283"/>
<dbReference type="UniPathway" id="UPA00213"/>
<dbReference type="GO" id="GO:0004315">
    <property type="term" value="F:3-oxoacyl-[acyl-carrier-protein] synthase activity"/>
    <property type="evidence" value="ECO:0007669"/>
    <property type="project" value="InterPro"/>
</dbReference>
<dbReference type="GO" id="GO:0004312">
    <property type="term" value="F:fatty acid synthase activity"/>
    <property type="evidence" value="ECO:0007669"/>
    <property type="project" value="TreeGrafter"/>
</dbReference>
<dbReference type="GO" id="GO:0006633">
    <property type="term" value="P:fatty acid biosynthetic process"/>
    <property type="evidence" value="ECO:0007669"/>
    <property type="project" value="InterPro"/>
</dbReference>
<dbReference type="GO" id="GO:0044550">
    <property type="term" value="P:secondary metabolite biosynthetic process"/>
    <property type="evidence" value="ECO:0007669"/>
    <property type="project" value="TreeGrafter"/>
</dbReference>
<dbReference type="CDD" id="cd00833">
    <property type="entry name" value="PKS"/>
    <property type="match status" value="1"/>
</dbReference>
<dbReference type="Gene3D" id="3.30.70.3290">
    <property type="match status" value="1"/>
</dbReference>
<dbReference type="Gene3D" id="3.40.47.10">
    <property type="match status" value="1"/>
</dbReference>
<dbReference type="Gene3D" id="1.10.1200.10">
    <property type="entry name" value="ACP-like"/>
    <property type="match status" value="2"/>
</dbReference>
<dbReference type="Gene3D" id="3.40.366.10">
    <property type="entry name" value="Malonyl-Coenzyme A Acyl Carrier Protein, domain 2"/>
    <property type="match status" value="2"/>
</dbReference>
<dbReference type="Gene3D" id="3.10.129.110">
    <property type="entry name" value="Polyketide synthase dehydratase"/>
    <property type="match status" value="1"/>
</dbReference>
<dbReference type="InterPro" id="IPR001227">
    <property type="entry name" value="Ac_transferase_dom_sf"/>
</dbReference>
<dbReference type="InterPro" id="IPR036736">
    <property type="entry name" value="ACP-like_sf"/>
</dbReference>
<dbReference type="InterPro" id="IPR014043">
    <property type="entry name" value="Acyl_transferase_dom"/>
</dbReference>
<dbReference type="InterPro" id="IPR016035">
    <property type="entry name" value="Acyl_Trfase/lysoPLipase"/>
</dbReference>
<dbReference type="InterPro" id="IPR018201">
    <property type="entry name" value="Ketoacyl_synth_AS"/>
</dbReference>
<dbReference type="InterPro" id="IPR014031">
    <property type="entry name" value="Ketoacyl_synth_C"/>
</dbReference>
<dbReference type="InterPro" id="IPR014030">
    <property type="entry name" value="Ketoacyl_synth_N"/>
</dbReference>
<dbReference type="InterPro" id="IPR016036">
    <property type="entry name" value="Malonyl_transacylase_ACP-bd"/>
</dbReference>
<dbReference type="InterPro" id="IPR020841">
    <property type="entry name" value="PKS_Beta-ketoAc_synthase_dom"/>
</dbReference>
<dbReference type="InterPro" id="IPR042104">
    <property type="entry name" value="PKS_dehydratase_sf"/>
</dbReference>
<dbReference type="InterPro" id="IPR049900">
    <property type="entry name" value="PKS_mFAS_DH"/>
</dbReference>
<dbReference type="InterPro" id="IPR050091">
    <property type="entry name" value="PKS_NRPS_Biosynth_Enz"/>
</dbReference>
<dbReference type="InterPro" id="IPR009081">
    <property type="entry name" value="PP-bd_ACP"/>
</dbReference>
<dbReference type="InterPro" id="IPR032088">
    <property type="entry name" value="SAT"/>
</dbReference>
<dbReference type="InterPro" id="IPR016039">
    <property type="entry name" value="Thiolase-like"/>
</dbReference>
<dbReference type="PANTHER" id="PTHR43775">
    <property type="entry name" value="FATTY ACID SYNTHASE"/>
    <property type="match status" value="1"/>
</dbReference>
<dbReference type="PANTHER" id="PTHR43775:SF21">
    <property type="entry name" value="NON-REDUCING POLYKETIDE SYNTHASE AUSA-RELATED"/>
    <property type="match status" value="1"/>
</dbReference>
<dbReference type="Pfam" id="PF00698">
    <property type="entry name" value="Acyl_transf_1"/>
    <property type="match status" value="1"/>
</dbReference>
<dbReference type="Pfam" id="PF00109">
    <property type="entry name" value="ketoacyl-synt"/>
    <property type="match status" value="1"/>
</dbReference>
<dbReference type="Pfam" id="PF02801">
    <property type="entry name" value="Ketoacyl-synt_C"/>
    <property type="match status" value="1"/>
</dbReference>
<dbReference type="Pfam" id="PF00550">
    <property type="entry name" value="PP-binding"/>
    <property type="match status" value="2"/>
</dbReference>
<dbReference type="Pfam" id="PF16073">
    <property type="entry name" value="SAT"/>
    <property type="match status" value="1"/>
</dbReference>
<dbReference type="SMART" id="SM00827">
    <property type="entry name" value="PKS_AT"/>
    <property type="match status" value="1"/>
</dbReference>
<dbReference type="SMART" id="SM00825">
    <property type="entry name" value="PKS_KS"/>
    <property type="match status" value="1"/>
</dbReference>
<dbReference type="SUPFAM" id="SSF47336">
    <property type="entry name" value="ACP-like"/>
    <property type="match status" value="2"/>
</dbReference>
<dbReference type="SUPFAM" id="SSF52151">
    <property type="entry name" value="FabD/lysophospholipase-like"/>
    <property type="match status" value="1"/>
</dbReference>
<dbReference type="SUPFAM" id="SSF55048">
    <property type="entry name" value="Probable ACP-binding domain of malonyl-CoA ACP transacylase"/>
    <property type="match status" value="1"/>
</dbReference>
<dbReference type="SUPFAM" id="SSF53901">
    <property type="entry name" value="Thiolase-like"/>
    <property type="match status" value="1"/>
</dbReference>
<dbReference type="PROSITE" id="PS50075">
    <property type="entry name" value="CARRIER"/>
    <property type="match status" value="2"/>
</dbReference>
<dbReference type="PROSITE" id="PS00606">
    <property type="entry name" value="KS3_1"/>
    <property type="match status" value="1"/>
</dbReference>
<dbReference type="PROSITE" id="PS52004">
    <property type="entry name" value="KS3_2"/>
    <property type="match status" value="1"/>
</dbReference>
<dbReference type="PROSITE" id="PS52019">
    <property type="entry name" value="PKS_MFAS_DH"/>
    <property type="match status" value="1"/>
</dbReference>
<dbReference type="PROSITE" id="PS00098">
    <property type="entry name" value="THIOLASE_1"/>
    <property type="match status" value="1"/>
</dbReference>
<feature type="chain" id="PRO_0000461042" description="Triacetic acid lactone synthase cle1">
    <location>
        <begin position="1"/>
        <end position="1807"/>
    </location>
</feature>
<feature type="domain" description="Starter acyltransferase (SAT)" evidence="1">
    <location>
        <begin position="107"/>
        <end position="280"/>
    </location>
</feature>
<feature type="domain" description="Ketosynthase family 3 (KS3)" evidence="3">
    <location>
        <begin position="385"/>
        <end position="795"/>
    </location>
</feature>
<feature type="domain" description="Malonyl-CoA:ACP transacylase (MAT)" evidence="1">
    <location>
        <begin position="919"/>
        <end position="1176"/>
    </location>
</feature>
<feature type="domain" description="PKS/mFAS DH" evidence="4">
    <location>
        <begin position="1272"/>
        <end position="1573"/>
    </location>
</feature>
<feature type="domain" description="Carrier 1" evidence="2">
    <location>
        <begin position="1605"/>
        <end position="1679"/>
    </location>
</feature>
<feature type="domain" description="Carrier 2" evidence="2">
    <location>
        <begin position="1721"/>
        <end position="1797"/>
    </location>
</feature>
<feature type="region of interest" description="N-terminal hotdog fold" evidence="4">
    <location>
        <begin position="1272"/>
        <end position="1398"/>
    </location>
</feature>
<feature type="region of interest" description="C-terminal hotdog fold" evidence="4">
    <location>
        <begin position="1416"/>
        <end position="1573"/>
    </location>
</feature>
<feature type="region of interest" description="Disordered" evidence="5">
    <location>
        <begin position="1690"/>
        <end position="1720"/>
    </location>
</feature>
<feature type="compositionally biased region" description="Low complexity" evidence="5">
    <location>
        <begin position="1692"/>
        <end position="1710"/>
    </location>
</feature>
<feature type="active site" description="For beta-ketoacyl synthase activity" evidence="3">
    <location>
        <position position="540"/>
    </location>
</feature>
<feature type="active site" description="For beta-ketoacyl synthase activity" evidence="3">
    <location>
        <position position="675"/>
    </location>
</feature>
<feature type="active site" description="For beta-ketoacyl synthase activity" evidence="3">
    <location>
        <position position="718"/>
    </location>
</feature>
<feature type="active site" description="Proton acceptor; for dehydratase activity" evidence="4">
    <location>
        <position position="1304"/>
    </location>
</feature>
<feature type="active site" description="Proton donor; for dehydratase activity" evidence="4">
    <location>
        <position position="1475"/>
    </location>
</feature>
<feature type="modified residue" description="O-(pantetheine 4'-phosphoryl)serine" evidence="2">
    <location>
        <position position="1639"/>
    </location>
</feature>
<feature type="modified residue" description="O-(pantetheine 4'-phosphoryl)serine" evidence="2">
    <location>
        <position position="1757"/>
    </location>
</feature>
<proteinExistence type="evidence at protein level"/>
<comment type="function">
    <text evidence="6">Non-reducing polyketide synthase; part of the cluster A that mediates the biosynthesis of chevalone E and its oxidized derivatives that possess a unique five-membered lactone ring and can synergistically enhance the cytotoxicity of doxorubicin (DOX) in breast cancer cells (Ref.1). Within the pathway, cle1 takes part to the biosynthesis of the molecular scaffold via the synthesis the alpha-pyrone triacetic acid lactone (TAL) from one molecule of acetyl-CoA and two molecules of malonyl-CoA (Ref.1). The molecular scaffold is commonly biosynthesized by a series of enzymes including the non-reducing polyketide synthase (NR-PKS) cle1 that produces the alpha-pyrone triacetic acid lactone (TAL); The membrane-bound prenyltransferase cle5 that accepts TAL as its substrate to perform a C-3 geranylgeranylation reaction, in which the pathway-dedicated GGPS cle6 is required to provide GGPP, the other substrate of cle5; the FAD-dependent monooxygenase Cle3 that forms an (S)-epoxide ring at the terminal olefin of the geranylgeranyl group; and the terpene cyclase Cle7 that catalyzes the cyclization of the prenyl group that yields the pentacyclic pathway intermediate chevalone E (Ref.1). Chevalone E can derivatize into seven new oxidized analogs by the cytochrome P450 monooxygenases cle2 (acting at C-20) and cle4 (acting at C-11 and C-12) (Ref.1).</text>
</comment>
<comment type="cofactor">
    <cofactor evidence="2">
        <name>pantetheine 4'-phosphate</name>
        <dbReference type="ChEBI" id="CHEBI:47942"/>
    </cofactor>
</comment>
<comment type="pathway">
    <text evidence="6">Secondary metabolite biosynthesis; terpenoid biosynthesis.</text>
</comment>
<comment type="domain">
    <text evidence="8">Multidomain protein; including a starter unit:ACP transacylase (SAT) that selects the starter unit; a ketosynthase (KS) that catalyzes repeated decarboxylative condensation to elongate the polyketide backbone; a malonyl-CoA:ACP transacylase (MAT) that selects and transfers the extender unit malonyl-CoA; a product template (PT) domain that controls the immediate cyclization regioselectivity of the reactive polyketide backbone; and 2 acyl-carrier proteins (ACPs) that serve as the tether of the growing and completed polyketide via its phosphopantetheinyl arm.</text>
</comment>
<comment type="biotechnology">
    <text evidence="6">Chevalone E derivatives produced by this cluster are interesting candidates for cancer therapy since they synergistically enhance the cytotoxicity of doxorubicin (DOX) in both MDA-MB-231 and MCF-7 breast cancer cell lines.</text>
</comment>
<protein>
    <recommendedName>
        <fullName evidence="7">Triacetic acid lactone synthase cle1</fullName>
        <shortName evidence="7">TAL synthase cle1</shortName>
        <ecNumber evidence="6">2.3.1.-</ecNumber>
    </recommendedName>
    <alternativeName>
        <fullName evidence="7">Chevalone E biosynthesis cluster protein 1</fullName>
    </alternativeName>
    <alternativeName>
        <fullName evidence="7">Non-reducing polyketide synthase cle1</fullName>
        <shortName evidence="7">NR-PKS cle1</shortName>
    </alternativeName>
</protein>
<keyword id="KW-0012">Acyltransferase</keyword>
<keyword id="KW-0511">Multifunctional enzyme</keyword>
<keyword id="KW-0596">Phosphopantetheine</keyword>
<keyword id="KW-0597">Phosphoprotein</keyword>
<keyword id="KW-0677">Repeat</keyword>
<keyword id="KW-0808">Transferase</keyword>
<reference key="1">
    <citation type="journal article" date="2019" name="Org. Chem. Front.">
        <title>Genome mining for fungal polyketide-diterpenoid hybrids: discovery of key terpene cyclases and multifunctional P450s for structural diversification.</title>
        <authorList>
            <person name="Wang W.G."/>
            <person name="Du L.Q."/>
            <person name="Sheng S.L."/>
            <person name="Li A."/>
            <person name="Li Y.P."/>
            <person name="Cheng G.G."/>
            <person name="Li G.P."/>
            <person name="Sun G."/>
            <person name="Hu Q."/>
            <person name="Matsuda Y."/>
        </authorList>
    </citation>
    <scope>NUCLEOTIDE SEQUENCE [GENOMIC DNA]</scope>
    <scope>FUNCTION</scope>
    <scope>CATALYTIC ACTIVITY</scope>
    <scope>PATHWAY</scope>
    <scope>BIOTECHNOLOGY</scope>
    <source>
        <strain>0312</strain>
    </source>
</reference>
<organism>
    <name type="scientific">Aspergillus versicolor</name>
    <dbReference type="NCBI Taxonomy" id="46472"/>
    <lineage>
        <taxon>Eukaryota</taxon>
        <taxon>Fungi</taxon>
        <taxon>Dikarya</taxon>
        <taxon>Ascomycota</taxon>
        <taxon>Pezizomycotina</taxon>
        <taxon>Eurotiomycetes</taxon>
        <taxon>Eurotiomycetidae</taxon>
        <taxon>Eurotiales</taxon>
        <taxon>Aspergillaceae</taxon>
        <taxon>Aspergillus</taxon>
        <taxon>Aspergillus subgen. Nidulantes</taxon>
    </lineage>
</organism>
<accession>A0A3T0ZHJ0</accession>